<sequence length="232" mass="24853">MAQAMASMAGLRGASQAVLEGSLQISGSNRLSGPTTSRVAVPKMGLNIRAQQVSAEAETSRRAMLGFVAAGLASGSFVKAVLAEARPIVVGPPPPLSGGLPGTENSDQARDGTLPYTKDRFYLQPLPPTEAAQRAKVSASEILNVKQFIDRKAWPSLQNDLRLRASYLRYDLKTVISAKPKDEKKSLQELTSKLFSSIDNLDHAAKIKSPTEAEKYYGQTVSNINEVLAKLG</sequence>
<protein>
    <recommendedName>
        <fullName>Oxygen-evolving enhancer protein 3, chloroplastic</fullName>
        <shortName>OEE3</shortName>
    </recommendedName>
    <alternativeName>
        <fullName>16 kDa subunit of oxygen evolving system of photosystem II</fullName>
    </alternativeName>
    <alternativeName>
        <fullName>OEC 16 kDa subunit</fullName>
    </alternativeName>
</protein>
<comment type="subcellular location">
    <subcellularLocation>
        <location>Plastid</location>
        <location>Chloroplast thylakoid membrane</location>
    </subcellularLocation>
    <text>Associated with the photosystem II complex.</text>
</comment>
<comment type="similarity">
    <text evidence="6">Belongs to the PsbQ family.</text>
</comment>
<feature type="transit peptide" description="Chloroplast" evidence="2 3 4 5">
    <location>
        <begin position="1"/>
        <end position="83"/>
    </location>
</feature>
<feature type="chain" id="PRO_0000029595" description="Oxygen-evolving enhancer protein 3, chloroplastic">
    <location>
        <begin position="84"/>
        <end position="232"/>
    </location>
</feature>
<feature type="region of interest" description="Disordered" evidence="1">
    <location>
        <begin position="92"/>
        <end position="111"/>
    </location>
</feature>
<feature type="strand" evidence="8">
    <location>
        <begin position="99"/>
        <end position="101"/>
    </location>
</feature>
<feature type="turn" evidence="8">
    <location>
        <begin position="102"/>
        <end position="104"/>
    </location>
</feature>
<feature type="turn" evidence="8">
    <location>
        <begin position="106"/>
        <end position="111"/>
    </location>
</feature>
<feature type="helix" evidence="8">
    <location>
        <begin position="117"/>
        <end position="120"/>
    </location>
</feature>
<feature type="strand" evidence="8">
    <location>
        <begin position="121"/>
        <end position="123"/>
    </location>
</feature>
<feature type="helix" evidence="7">
    <location>
        <begin position="128"/>
        <end position="143"/>
    </location>
</feature>
<feature type="helix" evidence="7">
    <location>
        <begin position="146"/>
        <end position="150"/>
    </location>
</feature>
<feature type="helix" evidence="7">
    <location>
        <begin position="154"/>
        <end position="178"/>
    </location>
</feature>
<feature type="helix" evidence="7">
    <location>
        <begin position="181"/>
        <end position="206"/>
    </location>
</feature>
<feature type="helix" evidence="7">
    <location>
        <begin position="210"/>
        <end position="231"/>
    </location>
</feature>
<evidence type="ECO:0000256" key="1">
    <source>
        <dbReference type="SAM" id="MobiDB-lite"/>
    </source>
</evidence>
<evidence type="ECO:0000269" key="2">
    <source>
    </source>
</evidence>
<evidence type="ECO:0000269" key="3">
    <source ref="2"/>
</evidence>
<evidence type="ECO:0000269" key="4">
    <source ref="4"/>
</evidence>
<evidence type="ECO:0000269" key="5">
    <source ref="5"/>
</evidence>
<evidence type="ECO:0000305" key="6"/>
<evidence type="ECO:0007829" key="7">
    <source>
        <dbReference type="PDB" id="1VYK"/>
    </source>
</evidence>
<evidence type="ECO:0007829" key="8">
    <source>
        <dbReference type="PDB" id="3JCU"/>
    </source>
</evidence>
<organism>
    <name type="scientific">Spinacia oleracea</name>
    <name type="common">Spinach</name>
    <dbReference type="NCBI Taxonomy" id="3562"/>
    <lineage>
        <taxon>Eukaryota</taxon>
        <taxon>Viridiplantae</taxon>
        <taxon>Streptophyta</taxon>
        <taxon>Embryophyta</taxon>
        <taxon>Tracheophyta</taxon>
        <taxon>Spermatophyta</taxon>
        <taxon>Magnoliopsida</taxon>
        <taxon>eudicotyledons</taxon>
        <taxon>Gunneridae</taxon>
        <taxon>Pentapetalae</taxon>
        <taxon>Caryophyllales</taxon>
        <taxon>Chenopodiaceae</taxon>
        <taxon>Chenopodioideae</taxon>
        <taxon>Anserineae</taxon>
        <taxon>Spinacia</taxon>
    </lineage>
</organism>
<gene>
    <name type="primary">PSBQ</name>
</gene>
<keyword id="KW-0002">3D-structure</keyword>
<keyword id="KW-0150">Chloroplast</keyword>
<keyword id="KW-0903">Direct protein sequencing</keyword>
<keyword id="KW-0472">Membrane</keyword>
<keyword id="KW-0602">Photosynthesis</keyword>
<keyword id="KW-0604">Photosystem II</keyword>
<keyword id="KW-0934">Plastid</keyword>
<keyword id="KW-1185">Reference proteome</keyword>
<keyword id="KW-0793">Thylakoid</keyword>
<keyword id="KW-0809">Transit peptide</keyword>
<name>PSBQ_SPIOL</name>
<dbReference type="EMBL" id="X05512">
    <property type="protein sequence ID" value="CAA29056.1"/>
    <property type="molecule type" value="mRNA"/>
</dbReference>
<dbReference type="PIR" id="S00008">
    <property type="entry name" value="S00008"/>
</dbReference>
<dbReference type="PDB" id="1NZE">
    <property type="method" value="X-ray"/>
    <property type="resolution" value="1.95 A"/>
    <property type="chains" value="A=84-232"/>
</dbReference>
<dbReference type="PDB" id="1VYK">
    <property type="method" value="X-ray"/>
    <property type="resolution" value="1.49 A"/>
    <property type="chains" value="A=84-232"/>
</dbReference>
<dbReference type="PDB" id="2MWQ">
    <property type="method" value="NMR"/>
    <property type="chains" value="A=84-232"/>
</dbReference>
<dbReference type="PDB" id="3JCU">
    <property type="method" value="EM"/>
    <property type="resolution" value="3.20 A"/>
    <property type="chains" value="Q/q=1-232"/>
</dbReference>
<dbReference type="PDB" id="8Z9D">
    <property type="method" value="EM"/>
    <property type="resolution" value="3.22 A"/>
    <property type="chains" value="Q/QQ/Qq/q=1-232"/>
</dbReference>
<dbReference type="PDBsum" id="1NZE"/>
<dbReference type="PDBsum" id="1VYK"/>
<dbReference type="PDBsum" id="2MWQ"/>
<dbReference type="PDBsum" id="3JCU"/>
<dbReference type="PDBsum" id="8Z9D"/>
<dbReference type="BMRB" id="P12301"/>
<dbReference type="EMDB" id="EMD-39860"/>
<dbReference type="SMR" id="P12301"/>
<dbReference type="DIP" id="DIP-62022N"/>
<dbReference type="IntAct" id="P12301">
    <property type="interactions" value="1"/>
</dbReference>
<dbReference type="OrthoDB" id="497707at2759"/>
<dbReference type="EvolutionaryTrace" id="P12301"/>
<dbReference type="Proteomes" id="UP001155700">
    <property type="component" value="Unplaced"/>
</dbReference>
<dbReference type="GO" id="GO:0009507">
    <property type="term" value="C:chloroplast"/>
    <property type="evidence" value="ECO:0000318"/>
    <property type="project" value="GO_Central"/>
</dbReference>
<dbReference type="GO" id="GO:0009535">
    <property type="term" value="C:chloroplast thylakoid membrane"/>
    <property type="evidence" value="ECO:0007669"/>
    <property type="project" value="UniProtKB-SubCell"/>
</dbReference>
<dbReference type="GO" id="GO:0019898">
    <property type="term" value="C:extrinsic component of membrane"/>
    <property type="evidence" value="ECO:0007669"/>
    <property type="project" value="InterPro"/>
</dbReference>
<dbReference type="GO" id="GO:0009654">
    <property type="term" value="C:photosystem II oxygen evolving complex"/>
    <property type="evidence" value="ECO:0007669"/>
    <property type="project" value="InterPro"/>
</dbReference>
<dbReference type="GO" id="GO:0005509">
    <property type="term" value="F:calcium ion binding"/>
    <property type="evidence" value="ECO:0007669"/>
    <property type="project" value="InterPro"/>
</dbReference>
<dbReference type="GO" id="GO:0045156">
    <property type="term" value="F:electron transporter, transferring electrons within the cyclic electron transport pathway of photosynthesis activity"/>
    <property type="evidence" value="ECO:0000318"/>
    <property type="project" value="GO_Central"/>
</dbReference>
<dbReference type="GO" id="GO:0009767">
    <property type="term" value="P:photosynthetic electron transport chain"/>
    <property type="evidence" value="ECO:0000318"/>
    <property type="project" value="GO_Central"/>
</dbReference>
<dbReference type="DisProt" id="DP01660"/>
<dbReference type="FunFam" id="1.20.120.290:FF:000001">
    <property type="entry name" value="Oxygen-evolving enhancer protein 3"/>
    <property type="match status" value="1"/>
</dbReference>
<dbReference type="Gene3D" id="1.20.120.290">
    <property type="entry name" value="Oxygen-evolving enhancer protein 3 (PsbQ), four-helix up-down bundle"/>
    <property type="match status" value="1"/>
</dbReference>
<dbReference type="InterPro" id="IPR023222">
    <property type="entry name" value="PsbQ-like_dom_sf"/>
</dbReference>
<dbReference type="InterPro" id="IPR008797">
    <property type="entry name" value="PSII_PsbQ"/>
</dbReference>
<dbReference type="InterPro" id="IPR054099">
    <property type="entry name" value="PSII_PsbQ_pln"/>
</dbReference>
<dbReference type="PANTHER" id="PTHR33399">
    <property type="entry name" value="OXYGEN-EVOLVING ENHANCER PROTEIN 3-1, CHLOROPLASTIC"/>
    <property type="match status" value="1"/>
</dbReference>
<dbReference type="PANTHER" id="PTHR33399:SF3">
    <property type="entry name" value="OXYGEN-EVOLVING ENHANCER PROTEIN 3-1, CHLOROPLASTIC"/>
    <property type="match status" value="1"/>
</dbReference>
<dbReference type="Pfam" id="PF05757">
    <property type="entry name" value="PsbQ"/>
    <property type="match status" value="1"/>
</dbReference>
<dbReference type="SUPFAM" id="SSF101112">
    <property type="entry name" value="Oxygen-evolving enhancer protein 3"/>
    <property type="match status" value="1"/>
</dbReference>
<accession>P12301</accession>
<proteinExistence type="evidence at protein level"/>
<reference key="1">
    <citation type="journal article" date="1987" name="FEBS Lett.">
        <title>Nucleotide sequence of cDNA clones encoding the complete '23 kDa' and '16 kDa' precursor proteins associated with the photosynthetic oxygen-evolving complex from spinach.</title>
        <authorList>
            <person name="Jansen T."/>
            <person name="Steppuhn R.C.J."/>
            <person name="Reinke H."/>
            <person name="Beyreuther K."/>
            <person name="Jansson C."/>
            <person name="Andersson B."/>
            <person name="Herrmann R.G."/>
        </authorList>
    </citation>
    <scope>NUCLEOTIDE SEQUENCE [MRNA]</scope>
</reference>
<reference key="2">
    <citation type="journal article" date="1986" name="Biochim. Biophys. Acta">
        <title>Partial degradation of the 18-kDa protein of the photosynthetic oxygen-evolving complex: a study of a binding site.</title>
        <authorList>
            <person name="Kuwabara T."/>
            <person name="Murata T."/>
            <person name="Miyao M."/>
            <person name="Murata N."/>
        </authorList>
    </citation>
    <scope>PROTEIN SEQUENCE OF 84-127</scope>
</reference>
<reference key="3">
    <citation type="journal article" date="1989" name="J. Biol. Chem.">
        <title>The chloroplast reductase-binding protein is identical to the 16.5-kDa polypeptide described as a component of the oxygen-evolving complex.</title>
        <authorList>
            <person name="Soncini F.C."/>
            <person name="Vallejos R.H."/>
        </authorList>
    </citation>
    <scope>PROTEIN SEQUENCE OF 84-111</scope>
</reference>
<reference key="4">
    <citation type="journal article" date="1987" name="Prog. Photosyn. Res.">
        <title>Partial amino acid sequences of the proteins of pea and spinach photosystem II complex.</title>
        <authorList>
            <person name="Murata N."/>
            <person name="Kajiura H."/>
            <person name="Fujimura Y."/>
            <person name="Miyao M."/>
            <person name="Murata T."/>
            <person name="Watanabe A."/>
            <person name="Shinozaki K."/>
        </authorList>
    </citation>
    <scope>PROTEIN SEQUENCE OF 84-127</scope>
</reference>
<reference key="5">
    <citation type="journal article" date="1988" name="FEBS Lett.">
        <title>Characterization of low molecular mass proteins of photosystem II by N-terminal sequencing.</title>
        <authorList>
            <person name="Schroeder W.P."/>
            <person name="Henrysson T."/>
            <person name="Aakerlund H.-E."/>
        </authorList>
    </citation>
    <scope>PROTEIN SEQUENCE OF 84-107</scope>
</reference>